<evidence type="ECO:0000255" key="1">
    <source>
        <dbReference type="HAMAP-Rule" id="MF_01849"/>
    </source>
</evidence>
<evidence type="ECO:0000255" key="2">
    <source>
        <dbReference type="PROSITE-ProRule" id="PRU01266"/>
    </source>
</evidence>
<proteinExistence type="inferred from homology"/>
<organism>
    <name type="scientific">Nitratiruptor sp. (strain SB155-2)</name>
    <dbReference type="NCBI Taxonomy" id="387092"/>
    <lineage>
        <taxon>Bacteria</taxon>
        <taxon>Pseudomonadati</taxon>
        <taxon>Campylobacterota</taxon>
        <taxon>Epsilonproteobacteria</taxon>
        <taxon>Nautiliales</taxon>
        <taxon>Nitratiruptoraceae</taxon>
        <taxon>Nitratiruptor</taxon>
    </lineage>
</organism>
<gene>
    <name evidence="1" type="primary">rlmN</name>
    <name type="ordered locus">NIS_0057</name>
</gene>
<name>RLMN_NITSB</name>
<sequence>MKNILDLTKEELQQEVTPKFRANQIYQWIYQKGAKDFESMSNLPKSMREELKEKFTITPPKILNVEVSKDGSKKYLLGLQDGHTVESVLLPMKKEERDEKGNILKEARYTVCVSSQVGCKVGCEFCLTAKGGFVRNLTPGEIVEQVLTIREDNNIPANRRVNIVYMGMGEPLDNLENVAKAVKIFSDEHGMSISPRRQTISTSGLAPKIKKLGEMNLGVLLAISLHAVDDELRQKLMPINKAYNIESVIQAVKEFPIDQRKRVMFEYLMIKNLNDDLKAAKKLVKLLHGIKAKVNLIYFNPYPGSPFQRPEPKDVEAFQKYLLDHGVLCTIRESKGLDISAACGQLKEKSHGCTL</sequence>
<comment type="function">
    <text evidence="1">Specifically methylates position 2 of adenine 2503 in 23S rRNA and position 2 of adenine 37 in tRNAs. m2A2503 modification seems to play a crucial role in the proofreading step occurring at the peptidyl transferase center and thus would serve to optimize ribosomal fidelity.</text>
</comment>
<comment type="catalytic activity">
    <reaction evidence="1">
        <text>adenosine(2503) in 23S rRNA + 2 reduced [2Fe-2S]-[ferredoxin] + 2 S-adenosyl-L-methionine = 2-methyladenosine(2503) in 23S rRNA + 5'-deoxyadenosine + L-methionine + 2 oxidized [2Fe-2S]-[ferredoxin] + S-adenosyl-L-homocysteine</text>
        <dbReference type="Rhea" id="RHEA:42916"/>
        <dbReference type="Rhea" id="RHEA-COMP:10000"/>
        <dbReference type="Rhea" id="RHEA-COMP:10001"/>
        <dbReference type="Rhea" id="RHEA-COMP:10152"/>
        <dbReference type="Rhea" id="RHEA-COMP:10282"/>
        <dbReference type="ChEBI" id="CHEBI:17319"/>
        <dbReference type="ChEBI" id="CHEBI:33737"/>
        <dbReference type="ChEBI" id="CHEBI:33738"/>
        <dbReference type="ChEBI" id="CHEBI:57844"/>
        <dbReference type="ChEBI" id="CHEBI:57856"/>
        <dbReference type="ChEBI" id="CHEBI:59789"/>
        <dbReference type="ChEBI" id="CHEBI:74411"/>
        <dbReference type="ChEBI" id="CHEBI:74497"/>
        <dbReference type="EC" id="2.1.1.192"/>
    </reaction>
</comment>
<comment type="catalytic activity">
    <reaction evidence="1">
        <text>adenosine(37) in tRNA + 2 reduced [2Fe-2S]-[ferredoxin] + 2 S-adenosyl-L-methionine = 2-methyladenosine(37) in tRNA + 5'-deoxyadenosine + L-methionine + 2 oxidized [2Fe-2S]-[ferredoxin] + S-adenosyl-L-homocysteine</text>
        <dbReference type="Rhea" id="RHEA:43332"/>
        <dbReference type="Rhea" id="RHEA-COMP:10000"/>
        <dbReference type="Rhea" id="RHEA-COMP:10001"/>
        <dbReference type="Rhea" id="RHEA-COMP:10162"/>
        <dbReference type="Rhea" id="RHEA-COMP:10485"/>
        <dbReference type="ChEBI" id="CHEBI:17319"/>
        <dbReference type="ChEBI" id="CHEBI:33737"/>
        <dbReference type="ChEBI" id="CHEBI:33738"/>
        <dbReference type="ChEBI" id="CHEBI:57844"/>
        <dbReference type="ChEBI" id="CHEBI:57856"/>
        <dbReference type="ChEBI" id="CHEBI:59789"/>
        <dbReference type="ChEBI" id="CHEBI:74411"/>
        <dbReference type="ChEBI" id="CHEBI:74497"/>
        <dbReference type="EC" id="2.1.1.192"/>
    </reaction>
</comment>
<comment type="cofactor">
    <cofactor evidence="1">
        <name>[4Fe-4S] cluster</name>
        <dbReference type="ChEBI" id="CHEBI:49883"/>
    </cofactor>
    <text evidence="1">Binds 1 [4Fe-4S] cluster. The cluster is coordinated with 3 cysteines and an exchangeable S-adenosyl-L-methionine.</text>
</comment>
<comment type="subcellular location">
    <subcellularLocation>
        <location evidence="1">Cytoplasm</location>
    </subcellularLocation>
</comment>
<comment type="miscellaneous">
    <text evidence="1">Reaction proceeds by a ping-pong mechanism involving intermediate methylation of a conserved cysteine residue.</text>
</comment>
<comment type="similarity">
    <text evidence="1">Belongs to the radical SAM superfamily. RlmN family.</text>
</comment>
<reference key="1">
    <citation type="journal article" date="2007" name="Proc. Natl. Acad. Sci. U.S.A.">
        <title>Deep-sea vent epsilon-proteobacterial genomes provide insights into emergence of pathogens.</title>
        <authorList>
            <person name="Nakagawa S."/>
            <person name="Takaki Y."/>
            <person name="Shimamura S."/>
            <person name="Reysenbach A.-L."/>
            <person name="Takai K."/>
            <person name="Horikoshi K."/>
        </authorList>
    </citation>
    <scope>NUCLEOTIDE SEQUENCE [LARGE SCALE GENOMIC DNA]</scope>
    <source>
        <strain>SB155-2</strain>
    </source>
</reference>
<dbReference type="EC" id="2.1.1.192" evidence="1"/>
<dbReference type="EMBL" id="AP009178">
    <property type="protein sequence ID" value="BAF69174.1"/>
    <property type="molecule type" value="Genomic_DNA"/>
</dbReference>
<dbReference type="RefSeq" id="WP_011979600.1">
    <property type="nucleotide sequence ID" value="NC_009662.1"/>
</dbReference>
<dbReference type="SMR" id="A6Q115"/>
<dbReference type="FunCoup" id="A6Q115">
    <property type="interactions" value="490"/>
</dbReference>
<dbReference type="STRING" id="387092.NIS_0057"/>
<dbReference type="KEGG" id="nis:NIS_0057"/>
<dbReference type="eggNOG" id="COG0820">
    <property type="taxonomic scope" value="Bacteria"/>
</dbReference>
<dbReference type="HOGENOM" id="CLU_029101_2_0_7"/>
<dbReference type="InParanoid" id="A6Q115"/>
<dbReference type="OrthoDB" id="9793973at2"/>
<dbReference type="Proteomes" id="UP000001118">
    <property type="component" value="Chromosome"/>
</dbReference>
<dbReference type="GO" id="GO:0005737">
    <property type="term" value="C:cytoplasm"/>
    <property type="evidence" value="ECO:0007669"/>
    <property type="project" value="UniProtKB-SubCell"/>
</dbReference>
<dbReference type="GO" id="GO:0051539">
    <property type="term" value="F:4 iron, 4 sulfur cluster binding"/>
    <property type="evidence" value="ECO:0007669"/>
    <property type="project" value="UniProtKB-UniRule"/>
</dbReference>
<dbReference type="GO" id="GO:0046872">
    <property type="term" value="F:metal ion binding"/>
    <property type="evidence" value="ECO:0007669"/>
    <property type="project" value="UniProtKB-KW"/>
</dbReference>
<dbReference type="GO" id="GO:0070040">
    <property type="term" value="F:rRNA (adenine(2503)-C2-)-methyltransferase activity"/>
    <property type="evidence" value="ECO:0007669"/>
    <property type="project" value="UniProtKB-UniRule"/>
</dbReference>
<dbReference type="GO" id="GO:0019843">
    <property type="term" value="F:rRNA binding"/>
    <property type="evidence" value="ECO:0007669"/>
    <property type="project" value="UniProtKB-UniRule"/>
</dbReference>
<dbReference type="GO" id="GO:0002935">
    <property type="term" value="F:tRNA (adenine(37)-C2)-methyltransferase activity"/>
    <property type="evidence" value="ECO:0007669"/>
    <property type="project" value="UniProtKB-UniRule"/>
</dbReference>
<dbReference type="GO" id="GO:0000049">
    <property type="term" value="F:tRNA binding"/>
    <property type="evidence" value="ECO:0007669"/>
    <property type="project" value="UniProtKB-UniRule"/>
</dbReference>
<dbReference type="GO" id="GO:0070475">
    <property type="term" value="P:rRNA base methylation"/>
    <property type="evidence" value="ECO:0007669"/>
    <property type="project" value="UniProtKB-UniRule"/>
</dbReference>
<dbReference type="GO" id="GO:0030488">
    <property type="term" value="P:tRNA methylation"/>
    <property type="evidence" value="ECO:0007669"/>
    <property type="project" value="UniProtKB-UniRule"/>
</dbReference>
<dbReference type="CDD" id="cd01335">
    <property type="entry name" value="Radical_SAM"/>
    <property type="match status" value="1"/>
</dbReference>
<dbReference type="FunFam" id="3.20.20.70:FF:000014">
    <property type="entry name" value="Probable dual-specificity RNA methyltransferase RlmN"/>
    <property type="match status" value="1"/>
</dbReference>
<dbReference type="Gene3D" id="1.10.150.530">
    <property type="match status" value="1"/>
</dbReference>
<dbReference type="Gene3D" id="3.20.20.70">
    <property type="entry name" value="Aldolase class I"/>
    <property type="match status" value="1"/>
</dbReference>
<dbReference type="HAMAP" id="MF_01849">
    <property type="entry name" value="RNA_methyltr_RlmN"/>
    <property type="match status" value="1"/>
</dbReference>
<dbReference type="InterPro" id="IPR013785">
    <property type="entry name" value="Aldolase_TIM"/>
</dbReference>
<dbReference type="InterPro" id="IPR006638">
    <property type="entry name" value="Elp3/MiaA/NifB-like_rSAM"/>
</dbReference>
<dbReference type="InterPro" id="IPR040072">
    <property type="entry name" value="Methyltransferase_A"/>
</dbReference>
<dbReference type="InterPro" id="IPR048641">
    <property type="entry name" value="RlmN_N"/>
</dbReference>
<dbReference type="InterPro" id="IPR027492">
    <property type="entry name" value="RNA_MTrfase_RlmN"/>
</dbReference>
<dbReference type="InterPro" id="IPR004383">
    <property type="entry name" value="rRNA_lsu_MTrfase_RlmN/Cfr"/>
</dbReference>
<dbReference type="InterPro" id="IPR007197">
    <property type="entry name" value="rSAM"/>
</dbReference>
<dbReference type="NCBIfam" id="TIGR00048">
    <property type="entry name" value="rRNA_mod_RlmN"/>
    <property type="match status" value="1"/>
</dbReference>
<dbReference type="PANTHER" id="PTHR30544">
    <property type="entry name" value="23S RRNA METHYLTRANSFERASE"/>
    <property type="match status" value="1"/>
</dbReference>
<dbReference type="PANTHER" id="PTHR30544:SF5">
    <property type="entry name" value="RADICAL SAM CORE DOMAIN-CONTAINING PROTEIN"/>
    <property type="match status" value="1"/>
</dbReference>
<dbReference type="Pfam" id="PF04055">
    <property type="entry name" value="Radical_SAM"/>
    <property type="match status" value="1"/>
</dbReference>
<dbReference type="Pfam" id="PF21016">
    <property type="entry name" value="RlmN_N"/>
    <property type="match status" value="1"/>
</dbReference>
<dbReference type="PIRSF" id="PIRSF006004">
    <property type="entry name" value="CHP00048"/>
    <property type="match status" value="1"/>
</dbReference>
<dbReference type="SFLD" id="SFLDF00275">
    <property type="entry name" value="adenosine_C2_methyltransferase"/>
    <property type="match status" value="1"/>
</dbReference>
<dbReference type="SFLD" id="SFLDS00029">
    <property type="entry name" value="Radical_SAM"/>
    <property type="match status" value="1"/>
</dbReference>
<dbReference type="SMART" id="SM00729">
    <property type="entry name" value="Elp3"/>
    <property type="match status" value="1"/>
</dbReference>
<dbReference type="SUPFAM" id="SSF102114">
    <property type="entry name" value="Radical SAM enzymes"/>
    <property type="match status" value="1"/>
</dbReference>
<dbReference type="PROSITE" id="PS51918">
    <property type="entry name" value="RADICAL_SAM"/>
    <property type="match status" value="1"/>
</dbReference>
<accession>A6Q115</accession>
<feature type="chain" id="PRO_0000350281" description="Dual-specificity RNA methyltransferase RlmN">
    <location>
        <begin position="1"/>
        <end position="355"/>
    </location>
</feature>
<feature type="domain" description="Radical SAM core" evidence="2">
    <location>
        <begin position="105"/>
        <end position="338"/>
    </location>
</feature>
<feature type="active site" description="Proton acceptor" evidence="1">
    <location>
        <position position="86"/>
    </location>
</feature>
<feature type="active site" description="S-methylcysteine intermediate" evidence="1">
    <location>
        <position position="343"/>
    </location>
</feature>
<feature type="binding site" evidence="1">
    <location>
        <position position="119"/>
    </location>
    <ligand>
        <name>[4Fe-4S] cluster</name>
        <dbReference type="ChEBI" id="CHEBI:49883"/>
        <note>4Fe-4S-S-AdoMet</note>
    </ligand>
</feature>
<feature type="binding site" evidence="1">
    <location>
        <position position="123"/>
    </location>
    <ligand>
        <name>[4Fe-4S] cluster</name>
        <dbReference type="ChEBI" id="CHEBI:49883"/>
        <note>4Fe-4S-S-AdoMet</note>
    </ligand>
</feature>
<feature type="binding site" evidence="1">
    <location>
        <position position="126"/>
    </location>
    <ligand>
        <name>[4Fe-4S] cluster</name>
        <dbReference type="ChEBI" id="CHEBI:49883"/>
        <note>4Fe-4S-S-AdoMet</note>
    </ligand>
</feature>
<feature type="binding site" evidence="1">
    <location>
        <begin position="169"/>
        <end position="170"/>
    </location>
    <ligand>
        <name>S-adenosyl-L-methionine</name>
        <dbReference type="ChEBI" id="CHEBI:59789"/>
    </ligand>
</feature>
<feature type="binding site" evidence="1">
    <location>
        <position position="201"/>
    </location>
    <ligand>
        <name>S-adenosyl-L-methionine</name>
        <dbReference type="ChEBI" id="CHEBI:59789"/>
    </ligand>
</feature>
<feature type="binding site" evidence="1">
    <location>
        <begin position="224"/>
        <end position="226"/>
    </location>
    <ligand>
        <name>S-adenosyl-L-methionine</name>
        <dbReference type="ChEBI" id="CHEBI:59789"/>
    </ligand>
</feature>
<feature type="binding site" evidence="1">
    <location>
        <position position="300"/>
    </location>
    <ligand>
        <name>S-adenosyl-L-methionine</name>
        <dbReference type="ChEBI" id="CHEBI:59789"/>
    </ligand>
</feature>
<feature type="disulfide bond" description="(transient)" evidence="1">
    <location>
        <begin position="112"/>
        <end position="343"/>
    </location>
</feature>
<keyword id="KW-0004">4Fe-4S</keyword>
<keyword id="KW-0963">Cytoplasm</keyword>
<keyword id="KW-1015">Disulfide bond</keyword>
<keyword id="KW-0408">Iron</keyword>
<keyword id="KW-0411">Iron-sulfur</keyword>
<keyword id="KW-0479">Metal-binding</keyword>
<keyword id="KW-0489">Methyltransferase</keyword>
<keyword id="KW-1185">Reference proteome</keyword>
<keyword id="KW-0698">rRNA processing</keyword>
<keyword id="KW-0949">S-adenosyl-L-methionine</keyword>
<keyword id="KW-0808">Transferase</keyword>
<keyword id="KW-0819">tRNA processing</keyword>
<protein>
    <recommendedName>
        <fullName evidence="1">Dual-specificity RNA methyltransferase RlmN</fullName>
        <ecNumber evidence="1">2.1.1.192</ecNumber>
    </recommendedName>
    <alternativeName>
        <fullName evidence="1">23S rRNA (adenine(2503)-C(2))-methyltransferase</fullName>
    </alternativeName>
    <alternativeName>
        <fullName evidence="1">23S rRNA m2A2503 methyltransferase</fullName>
    </alternativeName>
    <alternativeName>
        <fullName evidence="1">Ribosomal RNA large subunit methyltransferase N</fullName>
    </alternativeName>
    <alternativeName>
        <fullName evidence="1">tRNA (adenine(37)-C(2))-methyltransferase</fullName>
    </alternativeName>
    <alternativeName>
        <fullName evidence="1">tRNA m2A37 methyltransferase</fullName>
    </alternativeName>
</protein>